<accession>C3KVN2</accession>
<dbReference type="EMBL" id="CP001083">
    <property type="protein sequence ID" value="ACQ53118.1"/>
    <property type="molecule type" value="Genomic_DNA"/>
</dbReference>
<dbReference type="RefSeq" id="WP_003357513.1">
    <property type="nucleotide sequence ID" value="NC_012658.1"/>
</dbReference>
<dbReference type="SMR" id="C3KVN2"/>
<dbReference type="GeneID" id="92940231"/>
<dbReference type="KEGG" id="cbi:CLJ_B3770"/>
<dbReference type="HOGENOM" id="CLU_055188_4_2_9"/>
<dbReference type="Proteomes" id="UP000002333">
    <property type="component" value="Chromosome"/>
</dbReference>
<dbReference type="GO" id="GO:0022625">
    <property type="term" value="C:cytosolic large ribosomal subunit"/>
    <property type="evidence" value="ECO:0007669"/>
    <property type="project" value="TreeGrafter"/>
</dbReference>
<dbReference type="GO" id="GO:0019843">
    <property type="term" value="F:rRNA binding"/>
    <property type="evidence" value="ECO:0007669"/>
    <property type="project" value="UniProtKB-UniRule"/>
</dbReference>
<dbReference type="GO" id="GO:0003735">
    <property type="term" value="F:structural constituent of ribosome"/>
    <property type="evidence" value="ECO:0007669"/>
    <property type="project" value="InterPro"/>
</dbReference>
<dbReference type="GO" id="GO:0006412">
    <property type="term" value="P:translation"/>
    <property type="evidence" value="ECO:0007669"/>
    <property type="project" value="UniProtKB-UniRule"/>
</dbReference>
<dbReference type="Gene3D" id="3.100.10.10">
    <property type="match status" value="1"/>
</dbReference>
<dbReference type="HAMAP" id="MF_01341">
    <property type="entry name" value="Ribosomal_uL15"/>
    <property type="match status" value="1"/>
</dbReference>
<dbReference type="InterPro" id="IPR030878">
    <property type="entry name" value="Ribosomal_uL15"/>
</dbReference>
<dbReference type="InterPro" id="IPR021131">
    <property type="entry name" value="Ribosomal_uL15/eL18"/>
</dbReference>
<dbReference type="InterPro" id="IPR036227">
    <property type="entry name" value="Ribosomal_uL15/eL18_sf"/>
</dbReference>
<dbReference type="InterPro" id="IPR005749">
    <property type="entry name" value="Ribosomal_uL15_bac-type"/>
</dbReference>
<dbReference type="InterPro" id="IPR001196">
    <property type="entry name" value="Ribosomal_uL15_CS"/>
</dbReference>
<dbReference type="NCBIfam" id="TIGR01071">
    <property type="entry name" value="rplO_bact"/>
    <property type="match status" value="1"/>
</dbReference>
<dbReference type="PANTHER" id="PTHR12934">
    <property type="entry name" value="50S RIBOSOMAL PROTEIN L15"/>
    <property type="match status" value="1"/>
</dbReference>
<dbReference type="PANTHER" id="PTHR12934:SF11">
    <property type="entry name" value="LARGE RIBOSOMAL SUBUNIT PROTEIN UL15M"/>
    <property type="match status" value="1"/>
</dbReference>
<dbReference type="Pfam" id="PF00828">
    <property type="entry name" value="Ribosomal_L27A"/>
    <property type="match status" value="1"/>
</dbReference>
<dbReference type="SUPFAM" id="SSF52080">
    <property type="entry name" value="Ribosomal proteins L15p and L18e"/>
    <property type="match status" value="1"/>
</dbReference>
<dbReference type="PROSITE" id="PS00475">
    <property type="entry name" value="RIBOSOMAL_L15"/>
    <property type="match status" value="1"/>
</dbReference>
<reference key="1">
    <citation type="submission" date="2008-05" db="EMBL/GenBank/DDBJ databases">
        <title>Genome sequence of Clostridium botulinum Ba4 strain 657.</title>
        <authorList>
            <person name="Shrivastava S."/>
            <person name="Brown J.L."/>
            <person name="Bruce D."/>
            <person name="Detter C."/>
            <person name="Munk C."/>
            <person name="Smith L.A."/>
            <person name="Smith T.J."/>
            <person name="Sutton G."/>
            <person name="Brettin T.S."/>
        </authorList>
    </citation>
    <scope>NUCLEOTIDE SEQUENCE [LARGE SCALE GENOMIC DNA]</scope>
    <source>
        <strain>657 / Type Ba4</strain>
    </source>
</reference>
<keyword id="KW-0687">Ribonucleoprotein</keyword>
<keyword id="KW-0689">Ribosomal protein</keyword>
<keyword id="KW-0694">RNA-binding</keyword>
<keyword id="KW-0699">rRNA-binding</keyword>
<protein>
    <recommendedName>
        <fullName evidence="1">Large ribosomal subunit protein uL15</fullName>
    </recommendedName>
    <alternativeName>
        <fullName evidence="3">50S ribosomal protein L15</fullName>
    </alternativeName>
</protein>
<evidence type="ECO:0000255" key="1">
    <source>
        <dbReference type="HAMAP-Rule" id="MF_01341"/>
    </source>
</evidence>
<evidence type="ECO:0000256" key="2">
    <source>
        <dbReference type="SAM" id="MobiDB-lite"/>
    </source>
</evidence>
<evidence type="ECO:0000305" key="3"/>
<feature type="chain" id="PRO_1000214696" description="Large ribosomal subunit protein uL15">
    <location>
        <begin position="1"/>
        <end position="146"/>
    </location>
</feature>
<feature type="region of interest" description="Disordered" evidence="2">
    <location>
        <begin position="1"/>
        <end position="56"/>
    </location>
</feature>
<feature type="compositionally biased region" description="Gly residues" evidence="2">
    <location>
        <begin position="21"/>
        <end position="35"/>
    </location>
</feature>
<feature type="compositionally biased region" description="Gly residues" evidence="2">
    <location>
        <begin position="42"/>
        <end position="52"/>
    </location>
</feature>
<name>RL15_CLOB6</name>
<sequence>MKLHELKAAEGANKASKRVGRGTGSGLGKTSGRGQNGQNSRSGGGVRPGFEGGQMPLYRRLPKRGFKNIFAKEYAAINLDRLNCFEDGTVVTPELLVEKRVVKKVKDGVKILGNGNIEKKLTVKAAKFSKSAIEKIEAAGGKVEVI</sequence>
<organism>
    <name type="scientific">Clostridium botulinum (strain 657 / Type Ba4)</name>
    <dbReference type="NCBI Taxonomy" id="515621"/>
    <lineage>
        <taxon>Bacteria</taxon>
        <taxon>Bacillati</taxon>
        <taxon>Bacillota</taxon>
        <taxon>Clostridia</taxon>
        <taxon>Eubacteriales</taxon>
        <taxon>Clostridiaceae</taxon>
        <taxon>Clostridium</taxon>
    </lineage>
</organism>
<proteinExistence type="inferred from homology"/>
<comment type="function">
    <text evidence="1">Binds to the 23S rRNA.</text>
</comment>
<comment type="subunit">
    <text evidence="1">Part of the 50S ribosomal subunit.</text>
</comment>
<comment type="similarity">
    <text evidence="1">Belongs to the universal ribosomal protein uL15 family.</text>
</comment>
<gene>
    <name evidence="1" type="primary">rplO</name>
    <name type="ordered locus">CLJ_B3770</name>
</gene>